<geneLocation type="plasmid">
    <name>pNRC100</name>
</geneLocation>
<geneLocation type="plasmid">
    <name>pNRC200</name>
</geneLocation>
<geneLocation type="plasmid">
    <name>pHH1</name>
</geneLocation>
<organism>
    <name type="scientific">Halobacterium salinarum (strain ATCC 700922 / JCM 11081 / NRC-1)</name>
    <name type="common">Halobacterium halobium</name>
    <dbReference type="NCBI Taxonomy" id="64091"/>
    <lineage>
        <taxon>Archaea</taxon>
        <taxon>Methanobacteriati</taxon>
        <taxon>Methanobacteriota</taxon>
        <taxon>Stenosarchaea group</taxon>
        <taxon>Halobacteria</taxon>
        <taxon>Halobacteriales</taxon>
        <taxon>Halobacteriaceae</taxon>
        <taxon>Halobacterium</taxon>
        <taxon>Halobacterium salinarum NRC-34001</taxon>
    </lineage>
</organism>
<name>GVPM1_HALSA</name>
<keyword id="KW-0304">Gas vesicle</keyword>
<keyword id="KW-0614">Plasmid</keyword>
<keyword id="KW-1185">Reference proteome</keyword>
<dbReference type="EMBL" id="M58557">
    <property type="protein sequence ID" value="AAA98186.1"/>
    <property type="molecule type" value="Genomic_DNA"/>
</dbReference>
<dbReference type="EMBL" id="X55648">
    <property type="protein sequence ID" value="CAA39180.1"/>
    <property type="molecule type" value="Genomic_DNA"/>
</dbReference>
<dbReference type="EMBL" id="AF016485">
    <property type="protein sequence ID" value="AAC82799.1"/>
    <property type="molecule type" value="Genomic_DNA"/>
</dbReference>
<dbReference type="EMBL" id="AE004438">
    <property type="protein sequence ID" value="AAG20716.1"/>
    <property type="molecule type" value="Genomic_DNA"/>
</dbReference>
<dbReference type="PIR" id="T08232">
    <property type="entry name" value="T08232"/>
</dbReference>
<dbReference type="RefSeq" id="WP_010890529.1">
    <property type="nucleotide sequence ID" value="NC_001869.1"/>
</dbReference>
<dbReference type="GeneID" id="5954490"/>
<dbReference type="KEGG" id="hal:gvpM"/>
<dbReference type="KEGG" id="hal:VNG_6019G"/>
<dbReference type="PATRIC" id="fig|64091.14.peg.2090"/>
<dbReference type="HOGENOM" id="CLU_161794_1_1_2"/>
<dbReference type="InParanoid" id="P24377"/>
<dbReference type="OrthoDB" id="131850at2157"/>
<dbReference type="PhylomeDB" id="P24377"/>
<dbReference type="Proteomes" id="UP000000554">
    <property type="component" value="Plasmid pNRC100"/>
</dbReference>
<dbReference type="Proteomes" id="UP000000554">
    <property type="component" value="Plasmid pNRC200"/>
</dbReference>
<dbReference type="GO" id="GO:0031411">
    <property type="term" value="C:gas vesicle"/>
    <property type="evidence" value="ECO:0007669"/>
    <property type="project" value="UniProtKB-SubCell"/>
</dbReference>
<dbReference type="GO" id="GO:0012506">
    <property type="term" value="C:vesicle membrane"/>
    <property type="evidence" value="ECO:0007669"/>
    <property type="project" value="InterPro"/>
</dbReference>
<dbReference type="GO" id="GO:0005198">
    <property type="term" value="F:structural molecule activity"/>
    <property type="evidence" value="ECO:0007669"/>
    <property type="project" value="InterPro"/>
</dbReference>
<dbReference type="InterPro" id="IPR000638">
    <property type="entry name" value="Gas-vesicle_GvpA-like"/>
</dbReference>
<dbReference type="InterPro" id="IPR050530">
    <property type="entry name" value="GvpA"/>
</dbReference>
<dbReference type="InterPro" id="IPR018493">
    <property type="entry name" value="GvpA-like_CS"/>
</dbReference>
<dbReference type="NCBIfam" id="NF046091">
    <property type="entry name" value="halo_gas_GvpM"/>
    <property type="match status" value="1"/>
</dbReference>
<dbReference type="PANTHER" id="PTHR35344:SF4">
    <property type="entry name" value="GAS VESICLE PROTEIN A1"/>
    <property type="match status" value="1"/>
</dbReference>
<dbReference type="PANTHER" id="PTHR35344">
    <property type="entry name" value="GAS VESICLE STRUCTURAL PROTEIN 2-RELATED"/>
    <property type="match status" value="1"/>
</dbReference>
<dbReference type="Pfam" id="PF00741">
    <property type="entry name" value="Gas_vesicle"/>
    <property type="match status" value="1"/>
</dbReference>
<dbReference type="PROSITE" id="PS00234">
    <property type="entry name" value="GAS_VESICLE_A_1"/>
    <property type="match status" value="1"/>
</dbReference>
<dbReference type="PROSITE" id="PS00669">
    <property type="entry name" value="GAS_VESICLE_A_2"/>
    <property type="match status" value="1"/>
</dbReference>
<evidence type="ECO:0000269" key="1">
    <source>
    </source>
</evidence>
<evidence type="ECO:0000269" key="2">
    <source>
    </source>
</evidence>
<evidence type="ECO:0000269" key="3">
    <source>
    </source>
</evidence>
<evidence type="ECO:0000269" key="4">
    <source>
    </source>
</evidence>
<evidence type="ECO:0000269" key="5">
    <source>
    </source>
</evidence>
<evidence type="ECO:0000269" key="6">
    <source>
    </source>
</evidence>
<evidence type="ECO:0000269" key="7">
    <source>
    </source>
</evidence>
<evidence type="ECO:0000269" key="8">
    <source>
    </source>
</evidence>
<evidence type="ECO:0000269" key="9">
    <source>
    </source>
</evidence>
<evidence type="ECO:0000269" key="10">
    <source>
    </source>
</evidence>
<evidence type="ECO:0000269" key="11">
    <source>
    </source>
</evidence>
<evidence type="ECO:0000303" key="12">
    <source>
    </source>
</evidence>
<evidence type="ECO:0000303" key="13">
    <source>
    </source>
</evidence>
<evidence type="ECO:0000303" key="14">
    <source>
    </source>
</evidence>
<evidence type="ECO:0000305" key="15"/>
<evidence type="ECO:0000305" key="16">
    <source>
    </source>
</evidence>
<evidence type="ECO:0000305" key="17">
    <source>
    </source>
</evidence>
<evidence type="ECO:0000305" key="18">
    <source>
    </source>
</evidence>
<evidence type="ECO:0000305" key="19">
    <source>
    </source>
</evidence>
<evidence type="ECO:0000305" key="20">
    <source>
    </source>
</evidence>
<evidence type="ECO:0000305" key="21">
    <source>
    </source>
</evidence>
<evidence type="ECO:0000305" key="22">
    <source>
    </source>
</evidence>
<evidence type="ECO:0000312" key="23">
    <source>
        <dbReference type="EMBL" id="AAA98186.1"/>
    </source>
</evidence>
<evidence type="ECO:0000312" key="24">
    <source>
        <dbReference type="EMBL" id="AAG20716.1"/>
    </source>
</evidence>
<evidence type="ECO:0000312" key="25">
    <source>
        <dbReference type="EMBL" id="CAA39180.1"/>
    </source>
</evidence>
<protein>
    <recommendedName>
        <fullName>Gas vesicle protein M1</fullName>
        <shortName>GvpM1</shortName>
    </recommendedName>
</protein>
<gene>
    <name type="primary">gvpM11</name>
    <name evidence="12" type="synonym">gvpM</name>
    <name evidence="14" type="synonym">p-gvpM</name>
    <name type="ordered locus">VNG_5019G</name>
</gene>
<gene>
    <name evidence="24" type="primary">gvpM1</name>
    <name evidence="24" type="ordered locus">VNG_6019G</name>
</gene>
<sequence>MEPTKDETHAIVEFVDVLLRDGAVIQADVIVTVADIPLIGISLRAAIAGMTTMTEYGLFEEWDAAHRQQSEAFTTSPTADRRED</sequence>
<comment type="function">
    <text evidence="4 8 16 18 19 20">Proteins GvpF to GvpM might be involved in nucleating gas vesicle formation (Probable) (PubMed:15126480, PubMed:24846741, PubMed:33281806, PubMed:34975818). A minor component of the gas vesicle (PubMed:15126480). Gas vesicles are hollow, gas filled proteinaceous nanostructures found in several microbial planktonic microorganisms. They allow positioning of halobacteria at the optimal depth for growth in the poorly aerated, shallow brine pools of their habitat (PubMed:33711860).</text>
</comment>
<comment type="function">
    <text evidence="1 2 3 10 11">Expression of a 9.5 kb p-vac DNA fragment containing 2 divergently transcribed regions (gvpD-gvpE-gvpF-gvpG-gvpH-gvpI-gvpJ-gvpK-gvpL-gvpM and gvpA-gvpC-gvpN-gvpO) allows H.volcanii to produce gas vesicles. All site-directed mutagenesis is tested in H.volcanii (PubMed:10894744, PubMed:1404376, PubMed:7651141). A minimal gas vesicle can be made in H.volcanii by gvpA1-gvpO1 plus gvpF1-gvpG1-gvpJ1-gvpK1-gvpL1-gvpM1; lack of enough GvpJ1 prevents formation (PubMed:10894744). A similar region restores gas vesicle production in H.halobium without the p-vac locus, but it still has the c-vac locus (PubMed:1398080, PubMed:8002589).</text>
</comment>
<comment type="subunit">
    <text evidence="6 7 21">GvpF to GvpM interact with each other in vitro, and may form multi-subunit complex(es) (PubMed:24846741, PubMed:33281806). Might interact with GvpA1 (Probable).</text>
</comment>
<comment type="subcellular location">
    <subcellularLocation>
        <location evidence="4">Gas vesicle</location>
    </subcellularLocation>
</comment>
<comment type="induction">
    <text evidence="5 8 22">Probably part of a gvpF1-gvpG1-gvpH1-gvpI1-gvpJ1-gvpK1-gvpL1-gvpM1 operon, maximally expressed in early to mid log phase (Probable) (PubMed:1956294). Gas vesicles appear earlier when grown in static culture, possibly due to O(2)-limitation (PubMed:33711860).</text>
</comment>
<comment type="domain">
    <text evidence="6 9 20">The N-terminus (residues 1-25) interacts with GvpL (PubMed:34975818). A short motif conserved in GvpJ1/2 and GvpM1/2 (but not GvpA), which is predicted to be on the outer surface of the proteins, is important for the function of GvpJ and GvpM (Probable) (PubMed:24846741).</text>
</comment>
<comment type="disruption phenotype">
    <text evidence="1 5 11">Gas vesicles are only seen in stationary phase, not in log phase (PubMed:1956294). Gas vesicles are wild-type (PubMed:8002589). No gas vesicle production in H.volcanii (PubMed:10894744).</text>
</comment>
<comment type="miscellaneous">
    <text evidence="3 5 8">Encoded in a 14-gene plasmid locus called p-vac which produces predominantly short, spindle-shaped gas vesicles during all stages of growth.</text>
</comment>
<comment type="similarity">
    <text evidence="15 17">Belongs to the gas vesicle GvpA family.</text>
</comment>
<reference evidence="23" key="1">
    <citation type="journal article" date="1991" name="Gene">
        <title>Structure and organization of the gas vesicle gene cluster on the Halobacterium halobium plasmid pNRC100.</title>
        <authorList>
            <person name="Jones J.G."/>
            <person name="Young D.C."/>
            <person name="Dassarma S."/>
        </authorList>
    </citation>
    <scope>NUCLEOTIDE SEQUENCE [GENOMIC DNA]</scope>
    <source>
        <strain>ATCC 700922 / JCM 11081 / NRC-1</strain>
        <plasmid>pNRC100</plasmid>
    </source>
</reference>
<reference evidence="25" key="2">
    <citation type="journal article" date="1991" name="Mol. Microbiol.">
        <title>A DNA region of 9 kbp contains all genes necessary for gas vesicle synthesis in halophilic archaebacteria.</title>
        <authorList>
            <person name="Horne M."/>
            <person name="Englert C."/>
            <person name="Wimmer C."/>
            <person name="Pfeifer F."/>
        </authorList>
    </citation>
    <scope>NUCLEOTIDE SEQUENCE [GENOMIC DNA]</scope>
    <scope>INDUCTION</scope>
    <scope>DISRUPTION PHENOTYPE</scope>
    <source>
        <strain>NRC-817</strain>
        <plasmid>pHH1</plasmid>
    </source>
</reference>
<reference key="3">
    <citation type="journal article" date="1998" name="Genome Res.">
        <title>Snapshot of a large dynamic replicon in a halophilic archaeon: megaplasmid or minichromosome?</title>
        <authorList>
            <person name="Ng W.V."/>
            <person name="Ciufo S.A."/>
            <person name="Smith T.M."/>
            <person name="Bumgarner R.E."/>
            <person name="Baskin D."/>
            <person name="Faust J."/>
            <person name="Hall B."/>
            <person name="Loretz C."/>
            <person name="Seto J."/>
            <person name="Slagel J."/>
            <person name="Hood L."/>
            <person name="DasSarma S."/>
        </authorList>
    </citation>
    <scope>NUCLEOTIDE SEQUENCE [LARGE SCALE GENOMIC DNA]</scope>
    <source>
        <strain>ATCC 700922 / JCM 11081 / NRC-1</strain>
        <plasmid>pNRC100</plasmid>
    </source>
</reference>
<reference evidence="24" key="4">
    <citation type="journal article" date="2000" name="Proc. Natl. Acad. Sci. U.S.A.">
        <title>Genome sequence of Halobacterium species NRC-1.</title>
        <authorList>
            <person name="Ng W.V."/>
            <person name="Kennedy S.P."/>
            <person name="Mahairas G.G."/>
            <person name="Berquist B."/>
            <person name="Pan M."/>
            <person name="Shukla H.D."/>
            <person name="Lasky S.R."/>
            <person name="Baliga N.S."/>
            <person name="Thorsson V."/>
            <person name="Sbrogna J."/>
            <person name="Swartzell S."/>
            <person name="Weir D."/>
            <person name="Hall J."/>
            <person name="Dahl T.A."/>
            <person name="Welti R."/>
            <person name="Goo Y.A."/>
            <person name="Leithauser B."/>
            <person name="Keller K."/>
            <person name="Cruz R."/>
            <person name="Danson M.J."/>
            <person name="Hough D.W."/>
            <person name="Maddocks D.G."/>
            <person name="Jablonski P.E."/>
            <person name="Krebs M.P."/>
            <person name="Angevine C.M."/>
            <person name="Dale H."/>
            <person name="Isenbarger T.A."/>
            <person name="Peck R.F."/>
            <person name="Pohlschroder M."/>
            <person name="Spudich J.L."/>
            <person name="Jung K.-H."/>
            <person name="Alam M."/>
            <person name="Freitas T."/>
            <person name="Hou S."/>
            <person name="Daniels C.J."/>
            <person name="Dennis P.P."/>
            <person name="Omer A.D."/>
            <person name="Ebhardt H."/>
            <person name="Lowe T.M."/>
            <person name="Liang P."/>
            <person name="Riley M."/>
            <person name="Hood L."/>
            <person name="DasSarma S."/>
        </authorList>
    </citation>
    <scope>NUCLEOTIDE SEQUENCE [LARGE SCALE GENOMIC DNA]</scope>
    <source>
        <strain>ATCC 700922 / JCM 11081 / NRC-1</strain>
        <plasmid>pNRC200</plasmid>
    </source>
</reference>
<reference key="5">
    <citation type="journal article" date="1992" name="Gene">
        <title>Genetic transformation of a halophilic archaebacterium with a gas vesicle gene cluster restores its ability to float.</title>
        <authorList>
            <person name="Halladay J.T."/>
            <person name="Ng W.L."/>
            <person name="DasSarma S."/>
        </authorList>
    </citation>
    <scope>FUNCTION</scope>
    <scope>GAS VESICLE PRODUCTION</scope>
    <source>
        <strain>ATCC 700922 / JCM 11081 / NRC-1</strain>
        <plasmid>pNRC100</plasmid>
    </source>
</reference>
<reference key="6">
    <citation type="journal article" date="1992" name="J. Mol. Biol.">
        <title>Three different but related gene clusters encoding gas vesicles in halophilic archaea.</title>
        <authorList>
            <person name="Englert C."/>
            <person name="Krueger K."/>
            <person name="Offner S."/>
            <person name="Pfeifer F."/>
        </authorList>
    </citation>
    <scope>GAS VESICLE GENE CLUSTER</scope>
    <source>
        <strain>NRC-817</strain>
        <plasmid>pHH1</plasmid>
    </source>
</reference>
<reference key="7">
    <citation type="journal article" date="1994" name="J. Bacteriol.">
        <title>Wild-type gas vesicle formation requires at least ten genes in the gvp gene cluster of Halobacterium halobium plasmid pNRC100.</title>
        <authorList>
            <person name="DasSarma S."/>
            <person name="Arora P."/>
            <person name="Lin F."/>
            <person name="Molinari E."/>
            <person name="Yin L.R."/>
        </authorList>
    </citation>
    <scope>DISRUPTION PHENOTYPE</scope>
    <source>
        <strain>ATCC 700922 / JCM 11081 / NRC-1</strain>
        <plasmid>pNRC100</plasmid>
    </source>
</reference>
<reference key="8">
    <citation type="journal article" date="1995" name="Mol. Microbiol.">
        <title>Complementation studies with the gas vesicle-encoding p-vac region of Halobacterium salinarium PHH1 reveal a regulatory role for the p-gvpDE genes.</title>
        <authorList>
            <person name="Offner S."/>
            <person name="Pfeifer F."/>
        </authorList>
    </citation>
    <scope>FUNCTION</scope>
    <scope>INDUCTION</scope>
    <source>
        <strain>PHH1</strain>
    </source>
</reference>
<reference key="9">
    <citation type="journal article" date="1997" name="Microbiology">
        <title>Growth competition between Halobacterium salinarium strain PHH1 and mutants affected in gas vesicle synthesis.</title>
        <authorList>
            <person name="Beard S.J."/>
            <person name="Hayes P.K."/>
            <person name="Walsby A.E."/>
        </authorList>
    </citation>
    <scope>FUNCTION IN BUOYANCY</scope>
    <scope>POSSIBLE INDUCTION BY OXYGEN LIMITATION</scope>
    <source>
        <strain>PHH1</strain>
    </source>
</reference>
<reference key="10">
    <citation type="journal article" date="2000" name="J. Bacteriol.">
        <title>Eight of fourteen gvp genes are sufficient for formation of gas vesicles in halophilic archaea.</title>
        <authorList>
            <person name="Offner S."/>
            <person name="Hofacker A."/>
            <person name="Wanner G."/>
            <person name="Pfeifer F."/>
        </authorList>
    </citation>
    <scope>DISRUPTION PHENOTYPE</scope>
    <source>
        <strain>PHH1</strain>
        <plasmid>pHH1</plasmid>
    </source>
</reference>
<reference key="11">
    <citation type="journal article" date="2004" name="J. Bacteriol.">
        <title>Complexity of gas vesicle biogenesis in Halobacterium sp. strain NRC-1: identification of five new proteins.</title>
        <authorList>
            <person name="Shukla H.D."/>
            <person name="DasSarma S."/>
        </authorList>
    </citation>
    <scope>FUNCTION</scope>
    <scope>SUBCELLULAR LOCATION</scope>
    <source>
        <strain>ATCC 700922 / JCM 11081 / NRC-1</strain>
        <plasmid>pNRC100</plasmid>
    </source>
</reference>
<reference key="12">
    <citation type="journal article" date="2014" name="Extremophiles">
        <title>The accessory gas vesicle protein GvpM of haloarchaea and its interaction partners during gas vesicle formation.</title>
        <authorList>
            <person name="Tavlaridou S."/>
            <person name="Winter K."/>
            <person name="Pfeifer F."/>
        </authorList>
    </citation>
    <scope>FUNCTION</scope>
    <scope>SUBUNIT</scope>
    <scope>MOTIF</scope>
    <scope>MUTAGENESIS OF 2-GLU--ALA-10; 2-GLU--LYS-5; VAL-15; LEU-19; GLY-22; ALA-23; VAL-24; ARG-44; ALA-45; ALA-46; ILE-47; ALA-48 AND 75-THR--ASP-84</scope>
    <source>
        <strain>PHH1</strain>
    </source>
</reference>
<reference key="13">
    <citation type="journal article" date="2020" name="Front. Microbiol.">
        <title>Accessory Gvp Proteins Form a Complex During Gas Vesicle Formation of Haloarchaea.</title>
        <authorList>
            <person name="Voelkner K."/>
            <person name="Jost A."/>
            <person name="Pfeifer F."/>
        </authorList>
    </citation>
    <scope>FUNCTION</scope>
    <scope>SUBUNIT</scope>
    <source>
        <strain>PHH1</strain>
        <plasmid>pHH1</plasmid>
    </source>
</reference>
<reference key="14">
    <citation type="journal article" date="2021" name="Front. Microbiol.">
        <title>Effect of Mutations in GvpJ and GvpM on Gas Vesicle Formation of Halobacterium salinarum.</title>
        <authorList>
            <person name="Jost A."/>
            <person name="Knitsch R."/>
            <person name="Voelkner K."/>
            <person name="Pfeifer F."/>
        </authorList>
    </citation>
    <scope>INTERACTION WITH GVPJ1 AND GVPL1</scope>
    <scope>DOMAIN</scope>
    <scope>MUTAGENESIS OF HIS-9; ALA-10 AND ILE-11</scope>
    <source>
        <strain>PHH1</strain>
        <plasmid>pHH1</plasmid>
    </source>
</reference>
<reference key="15">
    <citation type="journal article" date="2022" name="Front. Microbiol.">
        <title>Interaction of the gas vesicle proteins GvpA, GvpC, GvpN, and GvpO of Halobacterium salinarum.</title>
        <authorList>
            <person name="Jost A."/>
            <person name="Pfeifer F."/>
        </authorList>
    </citation>
    <scope>SUBUNIT</scope>
    <source>
        <strain>PHH1</strain>
        <plasmid>pHH1</plasmid>
    </source>
</reference>
<feature type="chain" id="PRO_0000200006" description="Gas vesicle protein M1">
    <location>
        <begin position="1"/>
        <end position="84"/>
    </location>
</feature>
<feature type="region of interest" description="Interacts with GvpL1" evidence="9">
    <location>
        <begin position="1"/>
        <end position="25"/>
    </location>
</feature>
<feature type="region of interest" description="Alpha helix 1" evidence="20">
    <location>
        <begin position="5"/>
        <end position="21"/>
    </location>
</feature>
<feature type="region of interest" description="Beta-strand 1" evidence="20">
    <location>
        <begin position="27"/>
        <end position="29"/>
    </location>
</feature>
<feature type="region of interest" description="Beta-strand 2" evidence="20">
    <location>
        <begin position="41"/>
        <end position="43"/>
    </location>
</feature>
<feature type="region of interest" description="Alpha helix 2" evidence="20">
    <location>
        <begin position="46"/>
        <end position="56"/>
    </location>
</feature>
<feature type="region of interest" description="Alpha helix 3" evidence="20">
    <location>
        <begin position="62"/>
        <end position="84"/>
    </location>
</feature>
<feature type="short sequence motif" description="Conserved in GvpJ1/2 but not GvpA" evidence="13">
    <location>
        <begin position="44"/>
        <end position="48"/>
    </location>
</feature>
<feature type="mutagenesis site" description="No gas vesicles." evidence="6">
    <location>
        <begin position="2"/>
        <end position="10"/>
    </location>
</feature>
<feature type="mutagenesis site" description="Very few gas vesicles." evidence="6">
    <location>
        <begin position="2"/>
        <end position="5"/>
    </location>
</feature>
<feature type="mutagenesis site" description="No gas vesicles." evidence="9">
    <original>H</original>
    <variation>A</variation>
    <location>
        <position position="9"/>
    </location>
</feature>
<feature type="mutagenesis site" description="No gas vesicles." evidence="9">
    <original>A</original>
    <variation>D</variation>
    <location>
        <position position="10"/>
    </location>
</feature>
<feature type="mutagenesis site" description="No gas vesicles." evidence="9">
    <original>I</original>
    <variation>A</variation>
    <variation>D</variation>
    <location>
        <position position="11"/>
    </location>
</feature>
<feature type="mutagenesis site" description="No gas vesicles." evidence="6">
    <original>V</original>
    <variation>E</variation>
    <location>
        <position position="15"/>
    </location>
</feature>
<feature type="mutagenesis site" description="No gas vesicles." evidence="6">
    <original>L</original>
    <variation>E</variation>
    <location>
        <position position="19"/>
    </location>
</feature>
<feature type="mutagenesis site" description="No gas vesicles." evidence="6">
    <original>G</original>
    <variation>D</variation>
    <location>
        <position position="22"/>
    </location>
</feature>
<feature type="mutagenesis site" description="No gas vesicles." evidence="6">
    <original>A</original>
    <variation>D</variation>
    <location>
        <position position="23"/>
    </location>
</feature>
<feature type="mutagenesis site" description="No gas vesicles." evidence="6">
    <original>V</original>
    <variation>D</variation>
    <location>
        <position position="24"/>
    </location>
</feature>
<feature type="mutagenesis site" description="Very few gas vesicles." evidence="6">
    <original>R</original>
    <variation>E</variation>
    <location>
        <position position="44"/>
    </location>
</feature>
<feature type="mutagenesis site" description="Very few gas vesicles." evidence="6">
    <original>A</original>
    <variation>E</variation>
    <location>
        <position position="45"/>
    </location>
</feature>
<feature type="mutagenesis site" description="Very few gas vesicles." evidence="6">
    <original>A</original>
    <variation>E</variation>
    <location>
        <position position="46"/>
    </location>
</feature>
<feature type="mutagenesis site" description="Very few gas vesicles." evidence="6">
    <original>I</original>
    <variation>A</variation>
    <location>
        <position position="47"/>
    </location>
</feature>
<feature type="mutagenesis site" description="No gas vesicles." evidence="6">
    <original>A</original>
    <variation>D</variation>
    <location>
        <position position="48"/>
    </location>
</feature>
<feature type="mutagenesis site" description="Wild-type gas vesicles." evidence="6">
    <location>
        <begin position="75"/>
        <end position="84"/>
    </location>
</feature>
<proteinExistence type="evidence at protein level"/>
<accession>P24377</accession>
<accession>Q9HI28</accession>